<sequence length="271" mass="29783">MPELPEVETTLRGLAPHLVGQRIHGVILRRPDLRWPIAAQIEQLLPGATITDVRRRAKYLLIDTDAGGSAVLHLGMSGSLRVLPGDTPPRAHDHVDISLQNGRVLRFNDPRRFGCLLWQRDCETHELLASLGPEPLSAAFTGDYLHALACGRRAAVKTFLMDQAVVVGVGNIYAAESLHRAGISPLREAGKVSRERYRRLADAVKEILAYAIQRGGTTLRDFISPDGAPGYFEQELMVYGREGEACRHCGGELKHATIGQRATVWCAACQR</sequence>
<gene>
    <name evidence="2" type="primary">mutM</name>
    <name evidence="2" type="synonym">fpg</name>
    <name type="ordered locus">XCC4147</name>
</gene>
<accession>Q8P3C4</accession>
<dbReference type="EC" id="3.2.2.23" evidence="2"/>
<dbReference type="EC" id="4.2.99.18" evidence="2"/>
<dbReference type="EMBL" id="AE008922">
    <property type="protein sequence ID" value="AAM43368.1"/>
    <property type="molecule type" value="Genomic_DNA"/>
</dbReference>
<dbReference type="RefSeq" id="NP_639486.1">
    <property type="nucleotide sequence ID" value="NC_003902.1"/>
</dbReference>
<dbReference type="RefSeq" id="WP_011039216.1">
    <property type="nucleotide sequence ID" value="NC_003902.1"/>
</dbReference>
<dbReference type="SMR" id="Q8P3C4"/>
<dbReference type="STRING" id="190485.XCC4147"/>
<dbReference type="EnsemblBacteria" id="AAM43368">
    <property type="protein sequence ID" value="AAM43368"/>
    <property type="gene ID" value="XCC4147"/>
</dbReference>
<dbReference type="KEGG" id="xcc:XCC4147"/>
<dbReference type="PATRIC" id="fig|190485.4.peg.4445"/>
<dbReference type="eggNOG" id="COG0266">
    <property type="taxonomic scope" value="Bacteria"/>
</dbReference>
<dbReference type="HOGENOM" id="CLU_038423_1_1_6"/>
<dbReference type="OrthoDB" id="9800855at2"/>
<dbReference type="Proteomes" id="UP000001010">
    <property type="component" value="Chromosome"/>
</dbReference>
<dbReference type="GO" id="GO:0034039">
    <property type="term" value="F:8-oxo-7,8-dihydroguanine DNA N-glycosylase activity"/>
    <property type="evidence" value="ECO:0000318"/>
    <property type="project" value="GO_Central"/>
</dbReference>
<dbReference type="GO" id="GO:0140078">
    <property type="term" value="F:class I DNA-(apurinic or apyrimidinic site) endonuclease activity"/>
    <property type="evidence" value="ECO:0007669"/>
    <property type="project" value="UniProtKB-EC"/>
</dbReference>
<dbReference type="GO" id="GO:0003684">
    <property type="term" value="F:damaged DNA binding"/>
    <property type="evidence" value="ECO:0007669"/>
    <property type="project" value="InterPro"/>
</dbReference>
<dbReference type="GO" id="GO:0003906">
    <property type="term" value="F:DNA-(apurinic or apyrimidinic site) endonuclease activity"/>
    <property type="evidence" value="ECO:0000318"/>
    <property type="project" value="GO_Central"/>
</dbReference>
<dbReference type="GO" id="GO:0008270">
    <property type="term" value="F:zinc ion binding"/>
    <property type="evidence" value="ECO:0007669"/>
    <property type="project" value="UniProtKB-UniRule"/>
</dbReference>
<dbReference type="GO" id="GO:0006284">
    <property type="term" value="P:base-excision repair"/>
    <property type="evidence" value="ECO:0000318"/>
    <property type="project" value="GO_Central"/>
</dbReference>
<dbReference type="CDD" id="cd08966">
    <property type="entry name" value="EcFpg-like_N"/>
    <property type="match status" value="1"/>
</dbReference>
<dbReference type="FunFam" id="1.10.8.50:FF:000003">
    <property type="entry name" value="Formamidopyrimidine-DNA glycosylase"/>
    <property type="match status" value="1"/>
</dbReference>
<dbReference type="FunFam" id="3.20.190.10:FF:000001">
    <property type="entry name" value="Formamidopyrimidine-DNA glycosylase"/>
    <property type="match status" value="1"/>
</dbReference>
<dbReference type="Gene3D" id="1.10.8.50">
    <property type="match status" value="1"/>
</dbReference>
<dbReference type="Gene3D" id="3.20.190.10">
    <property type="entry name" value="MutM-like, N-terminal"/>
    <property type="match status" value="1"/>
</dbReference>
<dbReference type="HAMAP" id="MF_00103">
    <property type="entry name" value="Fapy_DNA_glycosyl"/>
    <property type="match status" value="1"/>
</dbReference>
<dbReference type="InterPro" id="IPR015886">
    <property type="entry name" value="DNA_glyclase/AP_lyase_DNA-bd"/>
</dbReference>
<dbReference type="InterPro" id="IPR015887">
    <property type="entry name" value="DNA_glyclase_Znf_dom_DNA_BS"/>
</dbReference>
<dbReference type="InterPro" id="IPR020629">
    <property type="entry name" value="Formamido-pyr_DNA_Glyclase"/>
</dbReference>
<dbReference type="InterPro" id="IPR012319">
    <property type="entry name" value="FPG_cat"/>
</dbReference>
<dbReference type="InterPro" id="IPR035937">
    <property type="entry name" value="MutM-like_N-ter"/>
</dbReference>
<dbReference type="InterPro" id="IPR010979">
    <property type="entry name" value="Ribosomal_uS13-like_H2TH"/>
</dbReference>
<dbReference type="InterPro" id="IPR000214">
    <property type="entry name" value="Znf_DNA_glyclase/AP_lyase"/>
</dbReference>
<dbReference type="InterPro" id="IPR010663">
    <property type="entry name" value="Znf_FPG/IleRS"/>
</dbReference>
<dbReference type="NCBIfam" id="TIGR00577">
    <property type="entry name" value="fpg"/>
    <property type="match status" value="1"/>
</dbReference>
<dbReference type="NCBIfam" id="NF002211">
    <property type="entry name" value="PRK01103.1"/>
    <property type="match status" value="1"/>
</dbReference>
<dbReference type="PANTHER" id="PTHR22993">
    <property type="entry name" value="FORMAMIDOPYRIMIDINE-DNA GLYCOSYLASE"/>
    <property type="match status" value="1"/>
</dbReference>
<dbReference type="PANTHER" id="PTHR22993:SF9">
    <property type="entry name" value="FORMAMIDOPYRIMIDINE-DNA GLYCOSYLASE"/>
    <property type="match status" value="1"/>
</dbReference>
<dbReference type="Pfam" id="PF01149">
    <property type="entry name" value="Fapy_DNA_glyco"/>
    <property type="match status" value="1"/>
</dbReference>
<dbReference type="Pfam" id="PF06831">
    <property type="entry name" value="H2TH"/>
    <property type="match status" value="1"/>
</dbReference>
<dbReference type="Pfam" id="PF06827">
    <property type="entry name" value="zf-FPG_IleRS"/>
    <property type="match status" value="1"/>
</dbReference>
<dbReference type="SMART" id="SM00898">
    <property type="entry name" value="Fapy_DNA_glyco"/>
    <property type="match status" value="1"/>
</dbReference>
<dbReference type="SMART" id="SM01232">
    <property type="entry name" value="H2TH"/>
    <property type="match status" value="1"/>
</dbReference>
<dbReference type="SUPFAM" id="SSF57716">
    <property type="entry name" value="Glucocorticoid receptor-like (DNA-binding domain)"/>
    <property type="match status" value="1"/>
</dbReference>
<dbReference type="SUPFAM" id="SSF81624">
    <property type="entry name" value="N-terminal domain of MutM-like DNA repair proteins"/>
    <property type="match status" value="1"/>
</dbReference>
<dbReference type="SUPFAM" id="SSF46946">
    <property type="entry name" value="S13-like H2TH domain"/>
    <property type="match status" value="1"/>
</dbReference>
<dbReference type="PROSITE" id="PS51068">
    <property type="entry name" value="FPG_CAT"/>
    <property type="match status" value="1"/>
</dbReference>
<dbReference type="PROSITE" id="PS01242">
    <property type="entry name" value="ZF_FPG_1"/>
    <property type="match status" value="1"/>
</dbReference>
<dbReference type="PROSITE" id="PS51066">
    <property type="entry name" value="ZF_FPG_2"/>
    <property type="match status" value="1"/>
</dbReference>
<feature type="initiator methionine" description="Removed" evidence="1">
    <location>
        <position position="1"/>
    </location>
</feature>
<feature type="chain" id="PRO_0000170887" description="Formamidopyrimidine-DNA glycosylase">
    <location>
        <begin position="2"/>
        <end position="271"/>
    </location>
</feature>
<feature type="zinc finger region" description="FPG-type" evidence="2">
    <location>
        <begin position="237"/>
        <end position="271"/>
    </location>
</feature>
<feature type="active site" description="Schiff-base intermediate with DNA" evidence="2">
    <location>
        <position position="2"/>
    </location>
</feature>
<feature type="active site" description="Proton donor" evidence="2">
    <location>
        <position position="3"/>
    </location>
</feature>
<feature type="active site" description="Proton donor; for beta-elimination activity" evidence="2">
    <location>
        <position position="58"/>
    </location>
</feature>
<feature type="active site" description="Proton donor; for delta-elimination activity" evidence="2">
    <location>
        <position position="261"/>
    </location>
</feature>
<feature type="binding site" evidence="2">
    <location>
        <position position="92"/>
    </location>
    <ligand>
        <name>DNA</name>
        <dbReference type="ChEBI" id="CHEBI:16991"/>
    </ligand>
</feature>
<feature type="binding site" evidence="2">
    <location>
        <position position="111"/>
    </location>
    <ligand>
        <name>DNA</name>
        <dbReference type="ChEBI" id="CHEBI:16991"/>
    </ligand>
</feature>
<feature type="binding site" evidence="2">
    <location>
        <position position="152"/>
    </location>
    <ligand>
        <name>DNA</name>
        <dbReference type="ChEBI" id="CHEBI:16991"/>
    </ligand>
</feature>
<name>FPG_XANCP</name>
<evidence type="ECO:0000250" key="1"/>
<evidence type="ECO:0000255" key="2">
    <source>
        <dbReference type="HAMAP-Rule" id="MF_00103"/>
    </source>
</evidence>
<protein>
    <recommendedName>
        <fullName evidence="2">Formamidopyrimidine-DNA glycosylase</fullName>
        <shortName evidence="2">Fapy-DNA glycosylase</shortName>
        <ecNumber evidence="2">3.2.2.23</ecNumber>
    </recommendedName>
    <alternativeName>
        <fullName evidence="2">DNA-(apurinic or apyrimidinic site) lyase MutM</fullName>
        <shortName evidence="2">AP lyase MutM</shortName>
        <ecNumber evidence="2">4.2.99.18</ecNumber>
    </alternativeName>
</protein>
<organism>
    <name type="scientific">Xanthomonas campestris pv. campestris (strain ATCC 33913 / DSM 3586 / NCPPB 528 / LMG 568 / P 25)</name>
    <dbReference type="NCBI Taxonomy" id="190485"/>
    <lineage>
        <taxon>Bacteria</taxon>
        <taxon>Pseudomonadati</taxon>
        <taxon>Pseudomonadota</taxon>
        <taxon>Gammaproteobacteria</taxon>
        <taxon>Lysobacterales</taxon>
        <taxon>Lysobacteraceae</taxon>
        <taxon>Xanthomonas</taxon>
    </lineage>
</organism>
<keyword id="KW-0227">DNA damage</keyword>
<keyword id="KW-0234">DNA repair</keyword>
<keyword id="KW-0238">DNA-binding</keyword>
<keyword id="KW-0326">Glycosidase</keyword>
<keyword id="KW-0378">Hydrolase</keyword>
<keyword id="KW-0456">Lyase</keyword>
<keyword id="KW-0479">Metal-binding</keyword>
<keyword id="KW-0511">Multifunctional enzyme</keyword>
<keyword id="KW-1185">Reference proteome</keyword>
<keyword id="KW-0862">Zinc</keyword>
<keyword id="KW-0863">Zinc-finger</keyword>
<reference key="1">
    <citation type="journal article" date="2002" name="Nature">
        <title>Comparison of the genomes of two Xanthomonas pathogens with differing host specificities.</title>
        <authorList>
            <person name="da Silva A.C.R."/>
            <person name="Ferro J.A."/>
            <person name="Reinach F.C."/>
            <person name="Farah C.S."/>
            <person name="Furlan L.R."/>
            <person name="Quaggio R.B."/>
            <person name="Monteiro-Vitorello C.B."/>
            <person name="Van Sluys M.A."/>
            <person name="Almeida N.F. Jr."/>
            <person name="Alves L.M.C."/>
            <person name="do Amaral A.M."/>
            <person name="Bertolini M.C."/>
            <person name="Camargo L.E.A."/>
            <person name="Camarotte G."/>
            <person name="Cannavan F."/>
            <person name="Cardozo J."/>
            <person name="Chambergo F."/>
            <person name="Ciapina L.P."/>
            <person name="Cicarelli R.M.B."/>
            <person name="Coutinho L.L."/>
            <person name="Cursino-Santos J.R."/>
            <person name="El-Dorry H."/>
            <person name="Faria J.B."/>
            <person name="Ferreira A.J.S."/>
            <person name="Ferreira R.C.C."/>
            <person name="Ferro M.I.T."/>
            <person name="Formighieri E.F."/>
            <person name="Franco M.C."/>
            <person name="Greggio C.C."/>
            <person name="Gruber A."/>
            <person name="Katsuyama A.M."/>
            <person name="Kishi L.T."/>
            <person name="Leite R.P."/>
            <person name="Lemos E.G.M."/>
            <person name="Lemos M.V.F."/>
            <person name="Locali E.C."/>
            <person name="Machado M.A."/>
            <person name="Madeira A.M.B.N."/>
            <person name="Martinez-Rossi N.M."/>
            <person name="Martins E.C."/>
            <person name="Meidanis J."/>
            <person name="Menck C.F.M."/>
            <person name="Miyaki C.Y."/>
            <person name="Moon D.H."/>
            <person name="Moreira L.M."/>
            <person name="Novo M.T.M."/>
            <person name="Okura V.K."/>
            <person name="Oliveira M.C."/>
            <person name="Oliveira V.R."/>
            <person name="Pereira H.A."/>
            <person name="Rossi A."/>
            <person name="Sena J.A.D."/>
            <person name="Silva C."/>
            <person name="de Souza R.F."/>
            <person name="Spinola L.A.F."/>
            <person name="Takita M.A."/>
            <person name="Tamura R.E."/>
            <person name="Teixeira E.C."/>
            <person name="Tezza R.I.D."/>
            <person name="Trindade dos Santos M."/>
            <person name="Truffi D."/>
            <person name="Tsai S.M."/>
            <person name="White F.F."/>
            <person name="Setubal J.C."/>
            <person name="Kitajima J.P."/>
        </authorList>
    </citation>
    <scope>NUCLEOTIDE SEQUENCE [LARGE SCALE GENOMIC DNA]</scope>
    <source>
        <strain>ATCC 33913 / DSM 3586 / NCPPB 528 / LMG 568 / P 25</strain>
    </source>
</reference>
<proteinExistence type="inferred from homology"/>
<comment type="function">
    <text evidence="2">Involved in base excision repair of DNA damaged by oxidation or by mutagenic agents. Acts as a DNA glycosylase that recognizes and removes damaged bases. Has a preference for oxidized purines, such as 7,8-dihydro-8-oxoguanine (8-oxoG). Has AP (apurinic/apyrimidinic) lyase activity and introduces nicks in the DNA strand. Cleaves the DNA backbone by beta-delta elimination to generate a single-strand break at the site of the removed base with both 3'- and 5'-phosphates.</text>
</comment>
<comment type="catalytic activity">
    <reaction evidence="2">
        <text>Hydrolysis of DNA containing ring-opened 7-methylguanine residues, releasing 2,6-diamino-4-hydroxy-5-(N-methyl)formamidopyrimidine.</text>
        <dbReference type="EC" id="3.2.2.23"/>
    </reaction>
</comment>
<comment type="catalytic activity">
    <reaction evidence="2">
        <text>2'-deoxyribonucleotide-(2'-deoxyribose 5'-phosphate)-2'-deoxyribonucleotide-DNA = a 3'-end 2'-deoxyribonucleotide-(2,3-dehydro-2,3-deoxyribose 5'-phosphate)-DNA + a 5'-end 5'-phospho-2'-deoxyribonucleoside-DNA + H(+)</text>
        <dbReference type="Rhea" id="RHEA:66592"/>
        <dbReference type="Rhea" id="RHEA-COMP:13180"/>
        <dbReference type="Rhea" id="RHEA-COMP:16897"/>
        <dbReference type="Rhea" id="RHEA-COMP:17067"/>
        <dbReference type="ChEBI" id="CHEBI:15378"/>
        <dbReference type="ChEBI" id="CHEBI:136412"/>
        <dbReference type="ChEBI" id="CHEBI:157695"/>
        <dbReference type="ChEBI" id="CHEBI:167181"/>
        <dbReference type="EC" id="4.2.99.18"/>
    </reaction>
</comment>
<comment type="cofactor">
    <cofactor evidence="2">
        <name>Zn(2+)</name>
        <dbReference type="ChEBI" id="CHEBI:29105"/>
    </cofactor>
    <text evidence="2">Binds 1 zinc ion per subunit.</text>
</comment>
<comment type="subunit">
    <text evidence="2">Monomer.</text>
</comment>
<comment type="similarity">
    <text evidence="2">Belongs to the FPG family.</text>
</comment>